<evidence type="ECO:0000255" key="1">
    <source>
        <dbReference type="HAMAP-Rule" id="MF_00558"/>
    </source>
</evidence>
<feature type="chain" id="PRO_0000102825" description="Succinate--CoA ligase [ADP-forming] subunit beta">
    <location>
        <begin position="1"/>
        <end position="386"/>
    </location>
</feature>
<feature type="domain" description="ATP-grasp" evidence="1">
    <location>
        <begin position="9"/>
        <end position="244"/>
    </location>
</feature>
<feature type="binding site" evidence="1">
    <location>
        <position position="46"/>
    </location>
    <ligand>
        <name>ATP</name>
        <dbReference type="ChEBI" id="CHEBI:30616"/>
    </ligand>
</feature>
<feature type="binding site" evidence="1">
    <location>
        <begin position="53"/>
        <end position="55"/>
    </location>
    <ligand>
        <name>ATP</name>
        <dbReference type="ChEBI" id="CHEBI:30616"/>
    </ligand>
</feature>
<feature type="binding site" evidence="1">
    <location>
        <position position="102"/>
    </location>
    <ligand>
        <name>ATP</name>
        <dbReference type="ChEBI" id="CHEBI:30616"/>
    </ligand>
</feature>
<feature type="binding site" evidence="1">
    <location>
        <position position="107"/>
    </location>
    <ligand>
        <name>ATP</name>
        <dbReference type="ChEBI" id="CHEBI:30616"/>
    </ligand>
</feature>
<feature type="binding site" evidence="1">
    <location>
        <position position="199"/>
    </location>
    <ligand>
        <name>Mg(2+)</name>
        <dbReference type="ChEBI" id="CHEBI:18420"/>
    </ligand>
</feature>
<feature type="binding site" evidence="1">
    <location>
        <position position="213"/>
    </location>
    <ligand>
        <name>Mg(2+)</name>
        <dbReference type="ChEBI" id="CHEBI:18420"/>
    </ligand>
</feature>
<feature type="binding site" evidence="1">
    <location>
        <position position="264"/>
    </location>
    <ligand>
        <name>substrate</name>
        <note>ligand shared with subunit alpha</note>
    </ligand>
</feature>
<feature type="binding site" evidence="1">
    <location>
        <begin position="321"/>
        <end position="323"/>
    </location>
    <ligand>
        <name>substrate</name>
        <note>ligand shared with subunit alpha</note>
    </ligand>
</feature>
<accession>Q9PL99</accession>
<gene>
    <name evidence="1" type="primary">sucC</name>
    <name type="ordered locus">TC_0208</name>
</gene>
<protein>
    <recommendedName>
        <fullName evidence="1">Succinate--CoA ligase [ADP-forming] subunit beta</fullName>
        <ecNumber evidence="1">6.2.1.5</ecNumber>
    </recommendedName>
    <alternativeName>
        <fullName evidence="1">Succinyl-CoA synthetase subunit beta</fullName>
        <shortName evidence="1">SCS-beta</shortName>
    </alternativeName>
</protein>
<sequence>MHLHEYQAKDLLTSYQLPIPPYHVATSLSEAEVAIQAEQWRSGVVKAQVHAGGRGKNGGVIVARSPEDLLAATDRLLHMQFSSNQTAGLSLPVNKVLISPLVEIALEYYIAIVIDRKHRCPVIMLSKSGGIDIEEIAEKQPDLLLKIALPSSGKIYAYQLRHIAKFMEWDKLVADRGNHIIRKLLQCFYDNDASLLEINPLVLTKDGDLIILDAKITIDDNALYRHPQLADWYDPSQENIRDVLAKQLGLSYIALDGTIGCLVNGAGLAMSTLDILKLYGGSAANFLDVGGSASEKQIQEAISLVLSDKNVRVLFIHIFGGIMDCAVVASGLVSAMQGQQGSIPTVIRLEGTNVDKGKEIILRSGIPCEFVASMSEGAELAVKLSR</sequence>
<proteinExistence type="inferred from homology"/>
<dbReference type="EC" id="6.2.1.5" evidence="1"/>
<dbReference type="EMBL" id="AE002160">
    <property type="protein sequence ID" value="AAF39080.1"/>
    <property type="molecule type" value="Genomic_DNA"/>
</dbReference>
<dbReference type="PIR" id="G81729">
    <property type="entry name" value="G81729"/>
</dbReference>
<dbReference type="RefSeq" id="WP_010229824.1">
    <property type="nucleotide sequence ID" value="NZ_CP063055.1"/>
</dbReference>
<dbReference type="SMR" id="Q9PL99"/>
<dbReference type="GeneID" id="1246334"/>
<dbReference type="KEGG" id="cmu:TC_0208"/>
<dbReference type="eggNOG" id="COG0045">
    <property type="taxonomic scope" value="Bacteria"/>
</dbReference>
<dbReference type="HOGENOM" id="CLU_037430_0_2_0"/>
<dbReference type="OrthoDB" id="9802602at2"/>
<dbReference type="UniPathway" id="UPA00223">
    <property type="reaction ID" value="UER00999"/>
</dbReference>
<dbReference type="Proteomes" id="UP000000800">
    <property type="component" value="Chromosome"/>
</dbReference>
<dbReference type="GO" id="GO:0005829">
    <property type="term" value="C:cytosol"/>
    <property type="evidence" value="ECO:0007669"/>
    <property type="project" value="TreeGrafter"/>
</dbReference>
<dbReference type="GO" id="GO:0042709">
    <property type="term" value="C:succinate-CoA ligase complex"/>
    <property type="evidence" value="ECO:0007669"/>
    <property type="project" value="TreeGrafter"/>
</dbReference>
<dbReference type="GO" id="GO:0005524">
    <property type="term" value="F:ATP binding"/>
    <property type="evidence" value="ECO:0007669"/>
    <property type="project" value="UniProtKB-UniRule"/>
</dbReference>
<dbReference type="GO" id="GO:0000287">
    <property type="term" value="F:magnesium ion binding"/>
    <property type="evidence" value="ECO:0007669"/>
    <property type="project" value="UniProtKB-UniRule"/>
</dbReference>
<dbReference type="GO" id="GO:0004775">
    <property type="term" value="F:succinate-CoA ligase (ADP-forming) activity"/>
    <property type="evidence" value="ECO:0007669"/>
    <property type="project" value="UniProtKB-UniRule"/>
</dbReference>
<dbReference type="GO" id="GO:0004776">
    <property type="term" value="F:succinate-CoA ligase (GDP-forming) activity"/>
    <property type="evidence" value="ECO:0007669"/>
    <property type="project" value="RHEA"/>
</dbReference>
<dbReference type="GO" id="GO:0006104">
    <property type="term" value="P:succinyl-CoA metabolic process"/>
    <property type="evidence" value="ECO:0007669"/>
    <property type="project" value="TreeGrafter"/>
</dbReference>
<dbReference type="GO" id="GO:0006099">
    <property type="term" value="P:tricarboxylic acid cycle"/>
    <property type="evidence" value="ECO:0007669"/>
    <property type="project" value="UniProtKB-UniRule"/>
</dbReference>
<dbReference type="FunFam" id="3.30.470.20:FF:000002">
    <property type="entry name" value="Succinate--CoA ligase [ADP-forming] subunit beta"/>
    <property type="match status" value="1"/>
</dbReference>
<dbReference type="FunFam" id="3.40.50.261:FF:000001">
    <property type="entry name" value="Succinate--CoA ligase [ADP-forming] subunit beta"/>
    <property type="match status" value="1"/>
</dbReference>
<dbReference type="Gene3D" id="3.30.1490.20">
    <property type="entry name" value="ATP-grasp fold, A domain"/>
    <property type="match status" value="1"/>
</dbReference>
<dbReference type="Gene3D" id="3.30.470.20">
    <property type="entry name" value="ATP-grasp fold, B domain"/>
    <property type="match status" value="1"/>
</dbReference>
<dbReference type="Gene3D" id="3.40.50.261">
    <property type="entry name" value="Succinyl-CoA synthetase domains"/>
    <property type="match status" value="1"/>
</dbReference>
<dbReference type="HAMAP" id="MF_00558">
    <property type="entry name" value="Succ_CoA_beta"/>
    <property type="match status" value="1"/>
</dbReference>
<dbReference type="InterPro" id="IPR011761">
    <property type="entry name" value="ATP-grasp"/>
</dbReference>
<dbReference type="InterPro" id="IPR013650">
    <property type="entry name" value="ATP-grasp_succ-CoA_synth-type"/>
</dbReference>
<dbReference type="InterPro" id="IPR013815">
    <property type="entry name" value="ATP_grasp_subdomain_1"/>
</dbReference>
<dbReference type="InterPro" id="IPR017866">
    <property type="entry name" value="Succ-CoA_synthase_bsu_CS"/>
</dbReference>
<dbReference type="InterPro" id="IPR005811">
    <property type="entry name" value="SUCC_ACL_C"/>
</dbReference>
<dbReference type="InterPro" id="IPR005809">
    <property type="entry name" value="Succ_CoA_ligase-like_bsu"/>
</dbReference>
<dbReference type="InterPro" id="IPR016102">
    <property type="entry name" value="Succinyl-CoA_synth-like"/>
</dbReference>
<dbReference type="NCBIfam" id="NF001913">
    <property type="entry name" value="PRK00696.1"/>
    <property type="match status" value="1"/>
</dbReference>
<dbReference type="NCBIfam" id="TIGR01016">
    <property type="entry name" value="sucCoAbeta"/>
    <property type="match status" value="1"/>
</dbReference>
<dbReference type="PANTHER" id="PTHR11815:SF10">
    <property type="entry name" value="SUCCINATE--COA LIGASE [GDP-FORMING] SUBUNIT BETA, MITOCHONDRIAL"/>
    <property type="match status" value="1"/>
</dbReference>
<dbReference type="PANTHER" id="PTHR11815">
    <property type="entry name" value="SUCCINYL-COA SYNTHETASE BETA CHAIN"/>
    <property type="match status" value="1"/>
</dbReference>
<dbReference type="Pfam" id="PF08442">
    <property type="entry name" value="ATP-grasp_2"/>
    <property type="match status" value="1"/>
</dbReference>
<dbReference type="Pfam" id="PF00549">
    <property type="entry name" value="Ligase_CoA"/>
    <property type="match status" value="1"/>
</dbReference>
<dbReference type="PIRSF" id="PIRSF001554">
    <property type="entry name" value="SucCS_beta"/>
    <property type="match status" value="1"/>
</dbReference>
<dbReference type="SUPFAM" id="SSF56059">
    <property type="entry name" value="Glutathione synthetase ATP-binding domain-like"/>
    <property type="match status" value="1"/>
</dbReference>
<dbReference type="SUPFAM" id="SSF52210">
    <property type="entry name" value="Succinyl-CoA synthetase domains"/>
    <property type="match status" value="1"/>
</dbReference>
<dbReference type="PROSITE" id="PS50975">
    <property type="entry name" value="ATP_GRASP"/>
    <property type="match status" value="1"/>
</dbReference>
<dbReference type="PROSITE" id="PS01217">
    <property type="entry name" value="SUCCINYL_COA_LIG_3"/>
    <property type="match status" value="1"/>
</dbReference>
<keyword id="KW-0067">ATP-binding</keyword>
<keyword id="KW-0436">Ligase</keyword>
<keyword id="KW-0460">Magnesium</keyword>
<keyword id="KW-0479">Metal-binding</keyword>
<keyword id="KW-0547">Nucleotide-binding</keyword>
<keyword id="KW-0816">Tricarboxylic acid cycle</keyword>
<comment type="function">
    <text evidence="1">Succinyl-CoA synthetase functions in the citric acid cycle (TCA), coupling the hydrolysis of succinyl-CoA to the synthesis of either ATP or GTP and thus represents the only step of substrate-level phosphorylation in the TCA. The beta subunit provides nucleotide specificity of the enzyme and binds the substrate succinate, while the binding sites for coenzyme A and phosphate are found in the alpha subunit.</text>
</comment>
<comment type="catalytic activity">
    <reaction evidence="1">
        <text>succinate + ATP + CoA = succinyl-CoA + ADP + phosphate</text>
        <dbReference type="Rhea" id="RHEA:17661"/>
        <dbReference type="ChEBI" id="CHEBI:30031"/>
        <dbReference type="ChEBI" id="CHEBI:30616"/>
        <dbReference type="ChEBI" id="CHEBI:43474"/>
        <dbReference type="ChEBI" id="CHEBI:57287"/>
        <dbReference type="ChEBI" id="CHEBI:57292"/>
        <dbReference type="ChEBI" id="CHEBI:456216"/>
        <dbReference type="EC" id="6.2.1.5"/>
    </reaction>
    <physiologicalReaction direction="right-to-left" evidence="1">
        <dbReference type="Rhea" id="RHEA:17663"/>
    </physiologicalReaction>
</comment>
<comment type="catalytic activity">
    <reaction evidence="1">
        <text>GTP + succinate + CoA = succinyl-CoA + GDP + phosphate</text>
        <dbReference type="Rhea" id="RHEA:22120"/>
        <dbReference type="ChEBI" id="CHEBI:30031"/>
        <dbReference type="ChEBI" id="CHEBI:37565"/>
        <dbReference type="ChEBI" id="CHEBI:43474"/>
        <dbReference type="ChEBI" id="CHEBI:57287"/>
        <dbReference type="ChEBI" id="CHEBI:57292"/>
        <dbReference type="ChEBI" id="CHEBI:58189"/>
    </reaction>
    <physiologicalReaction direction="right-to-left" evidence="1">
        <dbReference type="Rhea" id="RHEA:22122"/>
    </physiologicalReaction>
</comment>
<comment type="cofactor">
    <cofactor evidence="1">
        <name>Mg(2+)</name>
        <dbReference type="ChEBI" id="CHEBI:18420"/>
    </cofactor>
    <text evidence="1">Binds 1 Mg(2+) ion per subunit.</text>
</comment>
<comment type="pathway">
    <text evidence="1">Carbohydrate metabolism; tricarboxylic acid cycle; succinate from succinyl-CoA (ligase route): step 1/1.</text>
</comment>
<comment type="subunit">
    <text evidence="1">Heterotetramer of two alpha and two beta subunits.</text>
</comment>
<comment type="similarity">
    <text evidence="1">Belongs to the succinate/malate CoA ligase beta subunit family.</text>
</comment>
<name>SUCC_CHLMU</name>
<reference key="1">
    <citation type="journal article" date="2000" name="Nucleic Acids Res.">
        <title>Genome sequences of Chlamydia trachomatis MoPn and Chlamydia pneumoniae AR39.</title>
        <authorList>
            <person name="Read T.D."/>
            <person name="Brunham R.C."/>
            <person name="Shen C."/>
            <person name="Gill S.R."/>
            <person name="Heidelberg J.F."/>
            <person name="White O."/>
            <person name="Hickey E.K."/>
            <person name="Peterson J.D."/>
            <person name="Utterback T.R."/>
            <person name="Berry K.J."/>
            <person name="Bass S."/>
            <person name="Linher K.D."/>
            <person name="Weidman J.F."/>
            <person name="Khouri H.M."/>
            <person name="Craven B."/>
            <person name="Bowman C."/>
            <person name="Dodson R.J."/>
            <person name="Gwinn M.L."/>
            <person name="Nelson W.C."/>
            <person name="DeBoy R.T."/>
            <person name="Kolonay J.F."/>
            <person name="McClarty G."/>
            <person name="Salzberg S.L."/>
            <person name="Eisen J.A."/>
            <person name="Fraser C.M."/>
        </authorList>
    </citation>
    <scope>NUCLEOTIDE SEQUENCE [LARGE SCALE GENOMIC DNA]</scope>
    <source>
        <strain>MoPn / Nigg</strain>
    </source>
</reference>
<organism>
    <name type="scientific">Chlamydia muridarum (strain MoPn / Nigg)</name>
    <dbReference type="NCBI Taxonomy" id="243161"/>
    <lineage>
        <taxon>Bacteria</taxon>
        <taxon>Pseudomonadati</taxon>
        <taxon>Chlamydiota</taxon>
        <taxon>Chlamydiia</taxon>
        <taxon>Chlamydiales</taxon>
        <taxon>Chlamydiaceae</taxon>
        <taxon>Chlamydia/Chlamydophila group</taxon>
        <taxon>Chlamydia</taxon>
    </lineage>
</organism>